<dbReference type="PIR" id="S03400">
    <property type="entry name" value="S03400"/>
</dbReference>
<dbReference type="SMR" id="P14521"/>
<dbReference type="STRING" id="8005.ENSEEEP00000002752"/>
<dbReference type="Proteomes" id="UP000314983">
    <property type="component" value="Unassembled WGS sequence"/>
</dbReference>
<dbReference type="GO" id="GO:0072562">
    <property type="term" value="C:blood microparticle"/>
    <property type="evidence" value="ECO:0007669"/>
    <property type="project" value="TreeGrafter"/>
</dbReference>
<dbReference type="GO" id="GO:0031838">
    <property type="term" value="C:haptoglobin-hemoglobin complex"/>
    <property type="evidence" value="ECO:0007669"/>
    <property type="project" value="TreeGrafter"/>
</dbReference>
<dbReference type="GO" id="GO:0005833">
    <property type="term" value="C:hemoglobin complex"/>
    <property type="evidence" value="ECO:0007669"/>
    <property type="project" value="InterPro"/>
</dbReference>
<dbReference type="GO" id="GO:0031720">
    <property type="term" value="F:haptoglobin binding"/>
    <property type="evidence" value="ECO:0007669"/>
    <property type="project" value="TreeGrafter"/>
</dbReference>
<dbReference type="GO" id="GO:0020037">
    <property type="term" value="F:heme binding"/>
    <property type="evidence" value="ECO:0007669"/>
    <property type="project" value="InterPro"/>
</dbReference>
<dbReference type="GO" id="GO:0046872">
    <property type="term" value="F:metal ion binding"/>
    <property type="evidence" value="ECO:0007669"/>
    <property type="project" value="UniProtKB-KW"/>
</dbReference>
<dbReference type="GO" id="GO:0043177">
    <property type="term" value="F:organic acid binding"/>
    <property type="evidence" value="ECO:0007669"/>
    <property type="project" value="TreeGrafter"/>
</dbReference>
<dbReference type="GO" id="GO:0019825">
    <property type="term" value="F:oxygen binding"/>
    <property type="evidence" value="ECO:0007669"/>
    <property type="project" value="InterPro"/>
</dbReference>
<dbReference type="GO" id="GO:0005344">
    <property type="term" value="F:oxygen carrier activity"/>
    <property type="evidence" value="ECO:0007669"/>
    <property type="project" value="UniProtKB-KW"/>
</dbReference>
<dbReference type="GO" id="GO:0004601">
    <property type="term" value="F:peroxidase activity"/>
    <property type="evidence" value="ECO:0007669"/>
    <property type="project" value="TreeGrafter"/>
</dbReference>
<dbReference type="GO" id="GO:0042744">
    <property type="term" value="P:hydrogen peroxide catabolic process"/>
    <property type="evidence" value="ECO:0007669"/>
    <property type="project" value="TreeGrafter"/>
</dbReference>
<dbReference type="CDD" id="cd08925">
    <property type="entry name" value="Hb-beta-like"/>
    <property type="match status" value="1"/>
</dbReference>
<dbReference type="Gene3D" id="1.10.490.10">
    <property type="entry name" value="Globins"/>
    <property type="match status" value="1"/>
</dbReference>
<dbReference type="InterPro" id="IPR000971">
    <property type="entry name" value="Globin"/>
</dbReference>
<dbReference type="InterPro" id="IPR009050">
    <property type="entry name" value="Globin-like_sf"/>
</dbReference>
<dbReference type="InterPro" id="IPR012292">
    <property type="entry name" value="Globin/Proto"/>
</dbReference>
<dbReference type="InterPro" id="IPR002337">
    <property type="entry name" value="Hemoglobin_b"/>
</dbReference>
<dbReference type="InterPro" id="IPR050056">
    <property type="entry name" value="Hemoglobin_oxygen_transport"/>
</dbReference>
<dbReference type="PANTHER" id="PTHR11442">
    <property type="entry name" value="HEMOGLOBIN FAMILY MEMBER"/>
    <property type="match status" value="1"/>
</dbReference>
<dbReference type="PANTHER" id="PTHR11442:SF102">
    <property type="entry name" value="HEMOGLOBIN SUBUNIT BETA-1-RELATED"/>
    <property type="match status" value="1"/>
</dbReference>
<dbReference type="Pfam" id="PF00042">
    <property type="entry name" value="Globin"/>
    <property type="match status" value="1"/>
</dbReference>
<dbReference type="PRINTS" id="PR00814">
    <property type="entry name" value="BETAHAEM"/>
</dbReference>
<dbReference type="SUPFAM" id="SSF46458">
    <property type="entry name" value="Globin-like"/>
    <property type="match status" value="1"/>
</dbReference>
<dbReference type="PROSITE" id="PS01033">
    <property type="entry name" value="GLOBIN"/>
    <property type="match status" value="1"/>
</dbReference>
<comment type="function">
    <text>Involved in oxygen transport from gills to the various peripheral tissues.</text>
</comment>
<comment type="subunit">
    <text>Heterotetramer of two alpha chains and two beta chains.</text>
</comment>
<comment type="tissue specificity">
    <text>Red blood cells.</text>
</comment>
<comment type="similarity">
    <text evidence="1">Belongs to the globin family.</text>
</comment>
<proteinExistence type="evidence at protein level"/>
<organism>
    <name type="scientific">Electrophorus electricus</name>
    <name type="common">Electric eel</name>
    <name type="synonym">Gymnotus electricus</name>
    <dbReference type="NCBI Taxonomy" id="8005"/>
    <lineage>
        <taxon>Eukaryota</taxon>
        <taxon>Metazoa</taxon>
        <taxon>Chordata</taxon>
        <taxon>Craniata</taxon>
        <taxon>Vertebrata</taxon>
        <taxon>Euteleostomi</taxon>
        <taxon>Actinopterygii</taxon>
        <taxon>Neopterygii</taxon>
        <taxon>Teleostei</taxon>
        <taxon>Ostariophysi</taxon>
        <taxon>Gymnotiformes</taxon>
        <taxon>Gymnotoidei</taxon>
        <taxon>Gymnotidae</taxon>
        <taxon>Electrophorus</taxon>
    </lineage>
</organism>
<evidence type="ECO:0000255" key="1">
    <source>
        <dbReference type="PROSITE-ProRule" id="PRU00238"/>
    </source>
</evidence>
<keyword id="KW-0903">Direct protein sequencing</keyword>
<keyword id="KW-0349">Heme</keyword>
<keyword id="KW-0408">Iron</keyword>
<keyword id="KW-0479">Metal-binding</keyword>
<keyword id="KW-0561">Oxygen transport</keyword>
<keyword id="KW-1185">Reference proteome</keyword>
<keyword id="KW-0813">Transport</keyword>
<sequence length="147" mass="15779">VELTEAQRGAIVNLWGHLSPDEIGPQALARLLIVYPWTQRYFASFGNISSAAAIMGNPKVAAHGKVVVGALDKAVKNLNNIKGTYAALSTIHSEKLHVDPDNFRLLAESFTVSVAMKLGPSGFNAETQHALAKFLAEVVSALGKQYH</sequence>
<name>HBB_ELEEL</name>
<protein>
    <recommendedName>
        <fullName>Hemoglobin subunit beta</fullName>
    </recommendedName>
    <alternativeName>
        <fullName>Beta-globin</fullName>
    </alternativeName>
    <alternativeName>
        <fullName>Hemoglobin beta chain</fullName>
    </alternativeName>
</protein>
<reference key="1">
    <citation type="journal article" date="1989" name="Biol. Chem. Hoppe-Seyler">
        <title>The primary structure of the hemoglobin of the electric eel (Electrophorus electricus).</title>
        <authorList>
            <person name="Huber F."/>
            <person name="Braunitzer G."/>
        </authorList>
    </citation>
    <scope>PROTEIN SEQUENCE</scope>
</reference>
<feature type="chain" id="PRO_0000052952" description="Hemoglobin subunit beta">
    <location>
        <begin position="1"/>
        <end position="147"/>
    </location>
</feature>
<feature type="domain" description="Globin" evidence="1">
    <location>
        <begin position="2"/>
        <end position="147"/>
    </location>
</feature>
<feature type="binding site" description="distal binding residue">
    <location>
        <position position="63"/>
    </location>
    <ligand>
        <name>heme b</name>
        <dbReference type="ChEBI" id="CHEBI:60344"/>
    </ligand>
    <ligandPart>
        <name>Fe</name>
        <dbReference type="ChEBI" id="CHEBI:18248"/>
    </ligandPart>
</feature>
<feature type="binding site" description="proximal binding residue">
    <location>
        <position position="92"/>
    </location>
    <ligand>
        <name>heme b</name>
        <dbReference type="ChEBI" id="CHEBI:60344"/>
    </ligand>
    <ligandPart>
        <name>Fe</name>
        <dbReference type="ChEBI" id="CHEBI:18248"/>
    </ligandPart>
</feature>
<accession>P14521</accession>
<gene>
    <name type="primary">hbb</name>
</gene>